<reference key="1">
    <citation type="journal article" date="1983" name="Nucleic Acids Res.">
        <title>Sequence of 3,687 nucleotides from the 3' end of Sendai virus genome RNA and the predicted amino acid sequences of viral NP, P and C proteins.</title>
        <authorList>
            <person name="Shioda T."/>
            <person name="Hidaka Y."/>
            <person name="Kanda T."/>
            <person name="Shibuta H."/>
            <person name="Nomoto A."/>
            <person name="Iwasaki K."/>
        </authorList>
    </citation>
    <scope>NUCLEOTIDE SEQUENCE [GENOMIC RNA]</scope>
</reference>
<reference key="2">
    <citation type="submission" date="1985-02" db="EMBL/GenBank/DDBJ databases">
        <authorList>
            <person name="Shibuta H."/>
        </authorList>
    </citation>
    <scope>SEQUENCE REVISION</scope>
</reference>
<reference key="3">
    <citation type="journal article" date="1990" name="Virology">
        <title>Nucleotide sequence analyses of the genes encoding the HN, M, NP, P, and L proteins of two host range mutants of Sendai virus.</title>
        <authorList>
            <person name="Middleton Y."/>
            <person name="Tashiro M."/>
            <person name="Thai T."/>
            <person name="Oh J."/>
            <person name="Seymour J."/>
            <person name="Pritzer E."/>
            <person name="Klenk H.-D."/>
            <person name="Rott R."/>
            <person name="Seto J.T."/>
        </authorList>
    </citation>
    <scope>NUCLEOTIDE SEQUENCE [GENOMIC RNA]</scope>
    <source>
        <strain>Mutant F1-R</strain>
        <strain>Mutant ts-f1</strain>
    </source>
</reference>
<reference key="4">
    <citation type="journal article" date="1991" name="Virology">
        <title>Pneumotropic revertants derived from a pantropic mutant, F1-R, of Sendai virus.</title>
        <authorList>
            <person name="Tashiro M."/>
            <person name="James I."/>
            <person name="Karri S."/>
            <person name="Wahn K."/>
            <person name="Tobita K."/>
            <person name="Klenk H.-D."/>
            <person name="Rott R."/>
            <person name="Seto J.T."/>
        </authorList>
    </citation>
    <scope>NUCLEOTIDE SEQUENCE [GENOMIC RNA]</scope>
    <source>
        <strain>Mutant F1-R / T-5 revertant</strain>
        <strain>Mutant F1-R / T-7 revertant</strain>
    </source>
</reference>
<reference key="5">
    <citation type="journal article" date="1999" name="Immunity">
        <title>Crystal structures of two H-2Db/glycopeptide complexes suggest a molecular basis for CTL cross-reactivity.</title>
        <authorList>
            <person name="Glithero A."/>
            <person name="Tormo J."/>
            <person name="Haurum J.S."/>
            <person name="Arsequell G."/>
            <person name="Valencia G."/>
            <person name="Edwards J."/>
            <person name="Springer S."/>
            <person name="Townsend A."/>
            <person name="Pao Y.L."/>
            <person name="Wormald M."/>
            <person name="Dwek R.A."/>
            <person name="Jones E.Y."/>
            <person name="Elliott T."/>
        </authorList>
    </citation>
    <scope>X-RAY CRYSTALLOGRAPHY (2.9 ANGSTROMS) OF 324-332 COMPLEXED WITH MHC CLASS I H-2DB</scope>
</reference>
<keyword id="KW-0002">3D-structure</keyword>
<keyword id="KW-0167">Capsid protein</keyword>
<keyword id="KW-1139">Helical capsid protein</keyword>
<keyword id="KW-1035">Host cytoplasm</keyword>
<keyword id="KW-0687">Ribonucleoprotein</keyword>
<keyword id="KW-0694">RNA-binding</keyword>
<keyword id="KW-0543">Viral nucleoprotein</keyword>
<keyword id="KW-0946">Virion</keyword>
<accession>P04858</accession>
<accession>P27563</accession>
<accession>Q88268</accession>
<evidence type="ECO:0000250" key="1">
    <source>
        <dbReference type="UniProtKB" id="O57286"/>
    </source>
</evidence>
<evidence type="ECO:0000250" key="2">
    <source>
        <dbReference type="UniProtKB" id="P06159"/>
    </source>
</evidence>
<evidence type="ECO:0000250" key="3">
    <source>
        <dbReference type="UniProtKB" id="Q07097"/>
    </source>
</evidence>
<evidence type="ECO:0000305" key="4"/>
<comment type="function">
    <text evidence="2 3">Forms the helical nucleocapsid (NC) in a ratio of 1 N per 6 ribonucleotides, protecting the genome from nucleases (By similarity). The encapsidated genomic RNA serves as template for transcription and replication; encapsidation by N is coupled to RNA synthesis. Forms the encapsidation complex with the phosphoprotein protein P. Before encapsidation, the newly synthesized free N protein, so-called N0, is chaperoned by P (By similarity).</text>
</comment>
<comment type="subunit">
    <text evidence="1 2 3">Homomultimer; forms the nucleocapsid (By similarity). Binds to the viral genomic RNA (By similarity). N0 interacts with the phosphoprotein (via N-terminus); this interaction allows P to chaperon N0 to avoid N polymerization before encapsidation (By similarity). Interacts as N-RNA template with the phosphoprotein (via C-terminus); this interaction positions the polymerase on the template (By similarity).</text>
</comment>
<comment type="subcellular location">
    <subcellularLocation>
        <location evidence="4">Virion</location>
    </subcellularLocation>
    <subcellularLocation>
        <location>Host cytoplasm</location>
    </subcellularLocation>
</comment>
<comment type="domain">
    <text evidence="2">Ncore is globular and carries regions required for self-assembly and RNA-binding. Ntail is an intrinsically disordered monomeric domain in the C-terminus.</text>
</comment>
<comment type="miscellaneous">
    <text evidence="4">Most abundant protein in the virion. Since the viral RNA genome consists of 15,383 bases,there are 2564 molecules per encapsidated genome.</text>
</comment>
<comment type="similarity">
    <text evidence="4">Belongs to the paramyxoviruses nucleocapsid family.</text>
</comment>
<gene>
    <name type="primary">N</name>
    <name type="synonym">NP</name>
</gene>
<dbReference type="EMBL" id="X00087">
    <property type="protein sequence ID" value="CAA24945.1"/>
    <property type="molecule type" value="Genomic_RNA"/>
</dbReference>
<dbReference type="EMBL" id="M30202">
    <property type="protein sequence ID" value="AAB06278.1"/>
    <property type="molecule type" value="Genomic_RNA"/>
</dbReference>
<dbReference type="EMBL" id="M30203">
    <property type="protein sequence ID" value="AAB06284.1"/>
    <property type="molecule type" value="Genomic_RNA"/>
</dbReference>
<dbReference type="EMBL" id="M30204">
    <property type="protein sequence ID" value="AAB06196.1"/>
    <property type="molecule type" value="Genomic_RNA"/>
</dbReference>
<dbReference type="EMBL" id="M69046">
    <property type="protein sequence ID" value="AAB06290.1"/>
    <property type="molecule type" value="Genomic_RNA"/>
</dbReference>
<dbReference type="EMBL" id="M55565">
    <property type="protein sequence ID" value="AAB06297.1"/>
    <property type="molecule type" value="Genomic_RNA"/>
</dbReference>
<dbReference type="PIR" id="A04029">
    <property type="entry name" value="VHNZSV"/>
</dbReference>
<dbReference type="PDB" id="1CE6">
    <property type="method" value="X-ray"/>
    <property type="resolution" value="2.90 A"/>
    <property type="chains" value="C=324-332"/>
</dbReference>
<dbReference type="PDBsum" id="1CE6"/>
<dbReference type="BMRB" id="P04858"/>
<dbReference type="SMR" id="P04858"/>
<dbReference type="EvolutionaryTrace" id="P04858"/>
<dbReference type="Proteomes" id="UP000006560">
    <property type="component" value="Genome"/>
</dbReference>
<dbReference type="Proteomes" id="UP000110830">
    <property type="component" value="Genome"/>
</dbReference>
<dbReference type="Proteomes" id="UP000163956">
    <property type="component" value="Genome"/>
</dbReference>
<dbReference type="Proteomes" id="UP000169749">
    <property type="component" value="Genome"/>
</dbReference>
<dbReference type="Proteomes" id="UP000181310">
    <property type="component" value="Genome"/>
</dbReference>
<dbReference type="GO" id="GO:0019029">
    <property type="term" value="C:helical viral capsid"/>
    <property type="evidence" value="ECO:0007669"/>
    <property type="project" value="UniProtKB-KW"/>
</dbReference>
<dbReference type="GO" id="GO:0030430">
    <property type="term" value="C:host cell cytoplasm"/>
    <property type="evidence" value="ECO:0007669"/>
    <property type="project" value="UniProtKB-SubCell"/>
</dbReference>
<dbReference type="GO" id="GO:1990904">
    <property type="term" value="C:ribonucleoprotein complex"/>
    <property type="evidence" value="ECO:0007669"/>
    <property type="project" value="UniProtKB-KW"/>
</dbReference>
<dbReference type="GO" id="GO:0019013">
    <property type="term" value="C:viral nucleocapsid"/>
    <property type="evidence" value="ECO:0007669"/>
    <property type="project" value="UniProtKB-KW"/>
</dbReference>
<dbReference type="GO" id="GO:0003723">
    <property type="term" value="F:RNA binding"/>
    <property type="evidence" value="ECO:0007669"/>
    <property type="project" value="UniProtKB-KW"/>
</dbReference>
<dbReference type="GO" id="GO:0005198">
    <property type="term" value="F:structural molecule activity"/>
    <property type="evidence" value="ECO:0007669"/>
    <property type="project" value="InterPro"/>
</dbReference>
<dbReference type="InterPro" id="IPR002021">
    <property type="entry name" value="Paramyx_ncap"/>
</dbReference>
<dbReference type="Pfam" id="PF00973">
    <property type="entry name" value="Paramyxo_ncap"/>
    <property type="match status" value="1"/>
</dbReference>
<organismHost>
    <name type="scientific">Cavia cutleri</name>
    <name type="common">Guinea pig</name>
    <dbReference type="NCBI Taxonomy" id="10144"/>
</organismHost>
<organismHost>
    <name type="scientific">Cricetidae sp.</name>
    <name type="common">Hamster</name>
    <dbReference type="NCBI Taxonomy" id="36483"/>
</organismHost>
<organismHost>
    <name type="scientific">Mus musculus</name>
    <name type="common">Mouse</name>
    <dbReference type="NCBI Taxonomy" id="10090"/>
</organismHost>
<organismHost>
    <name type="scientific">Rattus norvegicus</name>
    <name type="common">Rat</name>
    <dbReference type="NCBI Taxonomy" id="10116"/>
</organismHost>
<organism>
    <name type="scientific">Sendai virus (strain Z)</name>
    <name type="common">SeV</name>
    <name type="synonym">Sendai virus (strain HVJ)</name>
    <dbReference type="NCBI Taxonomy" id="11198"/>
    <lineage>
        <taxon>Viruses</taxon>
        <taxon>Riboviria</taxon>
        <taxon>Orthornavirae</taxon>
        <taxon>Negarnaviricota</taxon>
        <taxon>Haploviricotina</taxon>
        <taxon>Monjiviricetes</taxon>
        <taxon>Mononegavirales</taxon>
        <taxon>Paramyxoviridae</taxon>
        <taxon>Feraresvirinae</taxon>
        <taxon>Respirovirus</taxon>
        <taxon>Respirovirus muris</taxon>
    </lineage>
</organism>
<proteinExistence type="evidence at protein level"/>
<protein>
    <recommendedName>
        <fullName>Nucleoprotein</fullName>
    </recommendedName>
    <alternativeName>
        <fullName>Nucleocapsid protein</fullName>
        <shortName>NP</shortName>
        <shortName>Protein N</shortName>
    </alternativeName>
</protein>
<feature type="chain" id="PRO_0000142684" description="Nucleoprotein">
    <location>
        <begin position="1"/>
        <end position="517"/>
    </location>
</feature>
<feature type="region of interest" description="Ncore" evidence="2">
    <location>
        <begin position="1"/>
        <end position="404"/>
    </location>
</feature>
<feature type="region of interest" description="Ntail" evidence="2">
    <location>
        <begin position="405"/>
        <end position="517"/>
    </location>
</feature>
<feature type="region of interest" description="Homomultimerization" evidence="3">
    <location>
        <begin position="440"/>
        <end position="461"/>
    </location>
</feature>
<feature type="region of interest" description="Interaction with the phosphoprotein" evidence="3">
    <location>
        <begin position="462"/>
        <end position="471"/>
    </location>
</feature>
<feature type="binding site" evidence="1">
    <location>
        <position position="180"/>
    </location>
    <ligand>
        <name>RNA</name>
        <dbReference type="ChEBI" id="CHEBI:33697"/>
    </ligand>
</feature>
<feature type="binding site" evidence="1">
    <location>
        <position position="190"/>
    </location>
    <ligand>
        <name>RNA</name>
        <dbReference type="ChEBI" id="CHEBI:33697"/>
    </ligand>
</feature>
<feature type="binding site" evidence="1">
    <location>
        <position position="195"/>
    </location>
    <ligand>
        <name>RNA</name>
        <dbReference type="ChEBI" id="CHEBI:33697"/>
    </ligand>
</feature>
<feature type="binding site" evidence="1">
    <location>
        <position position="260"/>
    </location>
    <ligand>
        <name>RNA</name>
        <dbReference type="ChEBI" id="CHEBI:33697"/>
    </ligand>
</feature>
<feature type="binding site" evidence="1">
    <location>
        <position position="350"/>
    </location>
    <ligand>
        <name>RNA</name>
        <dbReference type="ChEBI" id="CHEBI:33697"/>
    </ligand>
</feature>
<feature type="binding site" evidence="1">
    <location>
        <position position="354"/>
    </location>
    <ligand>
        <name>RNA</name>
        <dbReference type="ChEBI" id="CHEBI:33697"/>
    </ligand>
</feature>
<feature type="sequence variant" description="In strain: Mutant F1-R, Mutant ts-f1, Mutant F1-R / T-5 revertant and Mutant F1-R / T-7 revertant.">
    <original>R</original>
    <variation>G</variation>
    <location>
        <position position="24"/>
    </location>
</feature>
<feature type="sequence variant" description="In strain: Mutant F1-R / T-5 revertant and Mutant F1-R / T-7 revertant.">
    <original>L</original>
    <variation>P</variation>
    <location>
        <position position="42"/>
    </location>
</feature>
<feature type="sequence variant" description="In strain: Mutant F1-R, Mutant ts-f1, Mutant F1-R / T-5 revertant and Mutant F1-R / T-7 revertant.">
    <original>R</original>
    <variation>Q</variation>
    <location>
        <position position="67"/>
    </location>
</feature>
<feature type="sequence variant" description="In strain: Mutant F1-R, Mutant ts-f1, Mutant F1-R / T-5 revertant and Mutant F1-R / T-7 revertant.">
    <original>S</original>
    <variation>T</variation>
    <location>
        <position position="377"/>
    </location>
</feature>
<feature type="sequence variant" description="In strain: Mutant F1-R, Mutant ts-f1, Mutant F1-R / T-5 revertant and Mutant F1-R / T-7 revertant.">
    <original>EA</original>
    <variation>DT</variation>
    <location>
        <begin position="388"/>
        <end position="389"/>
    </location>
</feature>
<feature type="sequence variant" description="In strain: Mutant F1-R, Mutant ts-f1, Mutant F1-R / T-5 revertant and Mutant F1-R / T-7 revertant.">
    <original>S</original>
    <variation>N</variation>
    <location>
        <position position="400"/>
    </location>
</feature>
<feature type="sequence variant" description="In strain: Mutant F1-R, Mutant ts-f1, Mutant F1-R / T-5 revertant and Mutant F1-R / T-7 revertant.">
    <original>N</original>
    <variation>D</variation>
    <location>
        <position position="405"/>
    </location>
</feature>
<feature type="sequence variant" description="In strain: Mutant F1-R and Mutant F1-R / T-7 revertant.">
    <original>E</original>
    <variation>G</variation>
    <location>
        <position position="489"/>
    </location>
</feature>
<feature type="sequence variant" description="In strain: Mutant F1-R, Mutant ts-f1, Mutant F1-R / T-5 revertant and Mutant F1-R / T-7 revertant.">
    <original>ILQPMEMKAAITVSIMTKMTIPQQ</original>
    <variation>DSATHGDEGRNNGVDHDEDDDTAAVAGVGGI</variation>
    <location>
        <begin position="494"/>
        <end position="517"/>
    </location>
</feature>
<name>NCAP_SENDZ</name>
<sequence>MAGLLSTFDTFSSRRSESINKSGRGAVIPGQRSTVSVFVLGLSVTDDADKLFIATTFLAHSLDTDKRHSQRGGFLVSLLAMAYSSPELYLTTNGVNADVKYVIYNIEKDPKRTKTDGFIVKTRDMEYERTTEWLFGPMVNKSPLFQGQRDAADPDTLLQIYGYPACLGAIIVQVWIVLVKAITSSAGLRKGFFNRLEAFRQDGTVKGALVFTGETVEGIGSVMRSQQSLVSLMVETLVTMNTARSDLTTLEKNIQIVGNYIRDAGLASFMNTIKYGVETKMAALTLSNLRPDINKLRSLIDTYLSKGPRAPFICILKDPVHGEFAPGNYPALWSYAMGVAVVQNKAMQQYVTGRTYLDMEMFLLGQAVAKDAESKISSALEDELGVTEAAKGRLRHHLASLSGGNGAYRKPTGGGAIEVALDNADIDLETKAHADQDARGWGGDSGERWARQVSGGHFVTLHGAERLEEETNDEDVSDIERRIAMRLAERRQEILQPMEMKAAITVSIMTKMTIPQQ</sequence>